<comment type="function">
    <text evidence="1">Catalyzes the cyclization of GTP to (8S)-3',8-cyclo-7,8-dihydroguanosine 5'-triphosphate.</text>
</comment>
<comment type="catalytic activity">
    <reaction evidence="1">
        <text>GTP + AH2 + S-adenosyl-L-methionine = (8S)-3',8-cyclo-7,8-dihydroguanosine 5'-triphosphate + 5'-deoxyadenosine + L-methionine + A + H(+)</text>
        <dbReference type="Rhea" id="RHEA:49576"/>
        <dbReference type="ChEBI" id="CHEBI:13193"/>
        <dbReference type="ChEBI" id="CHEBI:15378"/>
        <dbReference type="ChEBI" id="CHEBI:17319"/>
        <dbReference type="ChEBI" id="CHEBI:17499"/>
        <dbReference type="ChEBI" id="CHEBI:37565"/>
        <dbReference type="ChEBI" id="CHEBI:57844"/>
        <dbReference type="ChEBI" id="CHEBI:59789"/>
        <dbReference type="ChEBI" id="CHEBI:131766"/>
        <dbReference type="EC" id="4.1.99.22"/>
    </reaction>
</comment>
<comment type="cofactor">
    <cofactor evidence="1">
        <name>[4Fe-4S] cluster</name>
        <dbReference type="ChEBI" id="CHEBI:49883"/>
    </cofactor>
    <text evidence="1">Binds 2 [4Fe-4S] clusters. Binds 1 [4Fe-4S] cluster coordinated with 3 cysteines and an exchangeable S-adenosyl-L-methionine and 1 [4Fe-4S] cluster coordinated with 3 cysteines and the GTP-derived substrate.</text>
</comment>
<comment type="pathway">
    <text evidence="1">Cofactor biosynthesis; molybdopterin biosynthesis.</text>
</comment>
<comment type="similarity">
    <text evidence="1">Belongs to the radical SAM superfamily. MoaA family.</text>
</comment>
<gene>
    <name evidence="1" type="primary">moaA</name>
    <name type="ordered locus">YG5714_1857</name>
</gene>
<name>MOAA_SACI7</name>
<organism>
    <name type="scientific">Saccharolobus islandicus (strain Y.G.57.14 / Yellowstone #1)</name>
    <name type="common">Sulfolobus islandicus</name>
    <dbReference type="NCBI Taxonomy" id="439386"/>
    <lineage>
        <taxon>Archaea</taxon>
        <taxon>Thermoproteota</taxon>
        <taxon>Thermoprotei</taxon>
        <taxon>Sulfolobales</taxon>
        <taxon>Sulfolobaceae</taxon>
        <taxon>Saccharolobus</taxon>
    </lineage>
</organism>
<accession>C3N7B9</accession>
<keyword id="KW-0004">4Fe-4S</keyword>
<keyword id="KW-0342">GTP-binding</keyword>
<keyword id="KW-0408">Iron</keyword>
<keyword id="KW-0411">Iron-sulfur</keyword>
<keyword id="KW-0456">Lyase</keyword>
<keyword id="KW-0479">Metal-binding</keyword>
<keyword id="KW-0501">Molybdenum cofactor biosynthesis</keyword>
<keyword id="KW-0547">Nucleotide-binding</keyword>
<keyword id="KW-0949">S-adenosyl-L-methionine</keyword>
<reference key="1">
    <citation type="journal article" date="2009" name="Proc. Natl. Acad. Sci. U.S.A.">
        <title>Biogeography of the Sulfolobus islandicus pan-genome.</title>
        <authorList>
            <person name="Reno M.L."/>
            <person name="Held N.L."/>
            <person name="Fields C.J."/>
            <person name="Burke P.V."/>
            <person name="Whitaker R.J."/>
        </authorList>
    </citation>
    <scope>NUCLEOTIDE SEQUENCE [LARGE SCALE GENOMIC DNA]</scope>
    <source>
        <strain>Y.G.57.14 / Yellowstone #1</strain>
    </source>
</reference>
<protein>
    <recommendedName>
        <fullName evidence="1">Probable GTP 3',8-cyclase</fullName>
        <ecNumber evidence="1">4.1.99.22</ecNumber>
    </recommendedName>
    <alternativeName>
        <fullName evidence="1">Molybdenum cofactor biosynthesis protein A</fullName>
    </alternativeName>
</protein>
<dbReference type="EC" id="4.1.99.22" evidence="1"/>
<dbReference type="EMBL" id="CP001403">
    <property type="protein sequence ID" value="ACP46113.1"/>
    <property type="molecule type" value="Genomic_DNA"/>
</dbReference>
<dbReference type="RefSeq" id="WP_012713959.1">
    <property type="nucleotide sequence ID" value="NC_012622.1"/>
</dbReference>
<dbReference type="SMR" id="C3N7B9"/>
<dbReference type="GeneID" id="7807260"/>
<dbReference type="KEGG" id="siy:YG5714_1857"/>
<dbReference type="HOGENOM" id="CLU_009273_0_1_2"/>
<dbReference type="UniPathway" id="UPA00344"/>
<dbReference type="Proteomes" id="UP000002308">
    <property type="component" value="Chromosome"/>
</dbReference>
<dbReference type="GO" id="GO:0051539">
    <property type="term" value="F:4 iron, 4 sulfur cluster binding"/>
    <property type="evidence" value="ECO:0007669"/>
    <property type="project" value="UniProtKB-UniRule"/>
</dbReference>
<dbReference type="GO" id="GO:0061799">
    <property type="term" value="F:cyclic pyranopterin monophosphate synthase activity"/>
    <property type="evidence" value="ECO:0007669"/>
    <property type="project" value="TreeGrafter"/>
</dbReference>
<dbReference type="GO" id="GO:0061798">
    <property type="term" value="F:GTP 3',8'-cyclase activity"/>
    <property type="evidence" value="ECO:0007669"/>
    <property type="project" value="UniProtKB-UniRule"/>
</dbReference>
<dbReference type="GO" id="GO:0005525">
    <property type="term" value="F:GTP binding"/>
    <property type="evidence" value="ECO:0007669"/>
    <property type="project" value="UniProtKB-UniRule"/>
</dbReference>
<dbReference type="GO" id="GO:0046872">
    <property type="term" value="F:metal ion binding"/>
    <property type="evidence" value="ECO:0007669"/>
    <property type="project" value="UniProtKB-KW"/>
</dbReference>
<dbReference type="GO" id="GO:1904047">
    <property type="term" value="F:S-adenosyl-L-methionine binding"/>
    <property type="evidence" value="ECO:0007669"/>
    <property type="project" value="UniProtKB-UniRule"/>
</dbReference>
<dbReference type="GO" id="GO:0006777">
    <property type="term" value="P:Mo-molybdopterin cofactor biosynthetic process"/>
    <property type="evidence" value="ECO:0007669"/>
    <property type="project" value="UniProtKB-UniRule"/>
</dbReference>
<dbReference type="CDD" id="cd01335">
    <property type="entry name" value="Radical_SAM"/>
    <property type="match status" value="1"/>
</dbReference>
<dbReference type="CDD" id="cd21117">
    <property type="entry name" value="Twitch_MoaA"/>
    <property type="match status" value="1"/>
</dbReference>
<dbReference type="Gene3D" id="3.20.20.70">
    <property type="entry name" value="Aldolase class I"/>
    <property type="match status" value="1"/>
</dbReference>
<dbReference type="HAMAP" id="MF_01225_A">
    <property type="entry name" value="MoaA_A"/>
    <property type="match status" value="1"/>
</dbReference>
<dbReference type="InterPro" id="IPR013785">
    <property type="entry name" value="Aldolase_TIM"/>
</dbReference>
<dbReference type="InterPro" id="IPR006638">
    <property type="entry name" value="Elp3/MiaA/NifB-like_rSAM"/>
</dbReference>
<dbReference type="InterPro" id="IPR013485">
    <property type="entry name" value="MoaA_arc"/>
</dbReference>
<dbReference type="InterPro" id="IPR010505">
    <property type="entry name" value="MoaA_twitch"/>
</dbReference>
<dbReference type="InterPro" id="IPR050105">
    <property type="entry name" value="MoCo_biosynth_MoaA/MoaC"/>
</dbReference>
<dbReference type="InterPro" id="IPR007197">
    <property type="entry name" value="rSAM"/>
</dbReference>
<dbReference type="NCBIfam" id="TIGR02668">
    <property type="entry name" value="moaA_archaeal"/>
    <property type="match status" value="1"/>
</dbReference>
<dbReference type="NCBIfam" id="NF001199">
    <property type="entry name" value="PRK00164.2-1"/>
    <property type="match status" value="1"/>
</dbReference>
<dbReference type="PANTHER" id="PTHR22960:SF0">
    <property type="entry name" value="MOLYBDENUM COFACTOR BIOSYNTHESIS PROTEIN 1"/>
    <property type="match status" value="1"/>
</dbReference>
<dbReference type="PANTHER" id="PTHR22960">
    <property type="entry name" value="MOLYBDOPTERIN COFACTOR SYNTHESIS PROTEIN A"/>
    <property type="match status" value="1"/>
</dbReference>
<dbReference type="Pfam" id="PF06463">
    <property type="entry name" value="Mob_synth_C"/>
    <property type="match status" value="1"/>
</dbReference>
<dbReference type="Pfam" id="PF04055">
    <property type="entry name" value="Radical_SAM"/>
    <property type="match status" value="1"/>
</dbReference>
<dbReference type="SFLD" id="SFLDG01383">
    <property type="entry name" value="cyclic_pyranopterin_phosphate"/>
    <property type="match status" value="1"/>
</dbReference>
<dbReference type="SFLD" id="SFLDG01067">
    <property type="entry name" value="SPASM/twitch_domain_containing"/>
    <property type="match status" value="1"/>
</dbReference>
<dbReference type="SMART" id="SM00729">
    <property type="entry name" value="Elp3"/>
    <property type="match status" value="1"/>
</dbReference>
<dbReference type="SUPFAM" id="SSF102114">
    <property type="entry name" value="Radical SAM enzymes"/>
    <property type="match status" value="1"/>
</dbReference>
<dbReference type="PROSITE" id="PS51918">
    <property type="entry name" value="RADICAL_SAM"/>
    <property type="match status" value="1"/>
</dbReference>
<proteinExistence type="inferred from homology"/>
<evidence type="ECO:0000255" key="1">
    <source>
        <dbReference type="HAMAP-Rule" id="MF_01225"/>
    </source>
</evidence>
<evidence type="ECO:0000255" key="2">
    <source>
        <dbReference type="PROSITE-ProRule" id="PRU01266"/>
    </source>
</evidence>
<feature type="chain" id="PRO_1000214005" description="Probable GTP 3',8-cyclase">
    <location>
        <begin position="1"/>
        <end position="308"/>
    </location>
</feature>
<feature type="domain" description="Radical SAM core" evidence="2">
    <location>
        <begin position="4"/>
        <end position="224"/>
    </location>
</feature>
<feature type="binding site" evidence="1">
    <location>
        <position position="13"/>
    </location>
    <ligand>
        <name>GTP</name>
        <dbReference type="ChEBI" id="CHEBI:37565"/>
    </ligand>
</feature>
<feature type="binding site" evidence="1">
    <location>
        <position position="20"/>
    </location>
    <ligand>
        <name>[4Fe-4S] cluster</name>
        <dbReference type="ChEBI" id="CHEBI:49883"/>
        <label>1</label>
        <note>4Fe-4S-S-AdoMet</note>
    </ligand>
</feature>
<feature type="binding site" evidence="1">
    <location>
        <position position="24"/>
    </location>
    <ligand>
        <name>[4Fe-4S] cluster</name>
        <dbReference type="ChEBI" id="CHEBI:49883"/>
        <label>1</label>
        <note>4Fe-4S-S-AdoMet</note>
    </ligand>
</feature>
<feature type="binding site" evidence="1">
    <location>
        <position position="27"/>
    </location>
    <ligand>
        <name>[4Fe-4S] cluster</name>
        <dbReference type="ChEBI" id="CHEBI:49883"/>
        <label>1</label>
        <note>4Fe-4S-S-AdoMet</note>
    </ligand>
</feature>
<feature type="binding site" evidence="1">
    <location>
        <position position="60"/>
    </location>
    <ligand>
        <name>GTP</name>
        <dbReference type="ChEBI" id="CHEBI:37565"/>
    </ligand>
</feature>
<feature type="binding site" evidence="1">
    <location>
        <position position="64"/>
    </location>
    <ligand>
        <name>S-adenosyl-L-methionine</name>
        <dbReference type="ChEBI" id="CHEBI:59789"/>
    </ligand>
</feature>
<feature type="binding site" evidence="1">
    <location>
        <position position="90"/>
    </location>
    <ligand>
        <name>GTP</name>
        <dbReference type="ChEBI" id="CHEBI:37565"/>
    </ligand>
</feature>
<feature type="binding site" evidence="1">
    <location>
        <position position="114"/>
    </location>
    <ligand>
        <name>S-adenosyl-L-methionine</name>
        <dbReference type="ChEBI" id="CHEBI:59789"/>
    </ligand>
</feature>
<feature type="binding site" evidence="1">
    <location>
        <position position="151"/>
    </location>
    <ligand>
        <name>GTP</name>
        <dbReference type="ChEBI" id="CHEBI:37565"/>
    </ligand>
</feature>
<feature type="binding site" evidence="1">
    <location>
        <position position="245"/>
    </location>
    <ligand>
        <name>[4Fe-4S] cluster</name>
        <dbReference type="ChEBI" id="CHEBI:49883"/>
        <label>2</label>
        <note>4Fe-4S-substrate</note>
    </ligand>
</feature>
<feature type="binding site" evidence="1">
    <location>
        <position position="248"/>
    </location>
    <ligand>
        <name>[4Fe-4S] cluster</name>
        <dbReference type="ChEBI" id="CHEBI:49883"/>
        <label>2</label>
        <note>4Fe-4S-substrate</note>
    </ligand>
</feature>
<feature type="binding site" evidence="1">
    <location>
        <begin position="250"/>
        <end position="252"/>
    </location>
    <ligand>
        <name>GTP</name>
        <dbReference type="ChEBI" id="CHEBI:37565"/>
    </ligand>
</feature>
<feature type="binding site" evidence="1">
    <location>
        <position position="262"/>
    </location>
    <ligand>
        <name>[4Fe-4S] cluster</name>
        <dbReference type="ChEBI" id="CHEBI:49883"/>
        <label>2</label>
        <note>4Fe-4S-substrate</note>
    </ligand>
</feature>
<sequence length="308" mass="35378">MIDRFGRPLEDLRITLTHVCNFECFFCHMEGEEGDNYILSKEDILLVAKVAKNFDINSVKLTGGEPTLRRDLVEIVRGLKQLGYRDVSMTTNGFLLKDLAYKLKLAGLDRINVSLHAISRETFKKITGVDAFDRVIEGIKSAIDVGLVPVKLNFVVNRRNREEVFKFIELSQNLGVNEIHLIELHPVGLGKLAFKEHDDLREIEEYIEKISIKKQIRKKHFRPRYVLPSGLIVEVIKPYANPIFCAGCNRIRLSVDGKLKTCLYREDNVIDILDILKGEYSEDVKEELLGRAFMIAIAIREPNFKYKI</sequence>